<accession>Q43931</accession>
<accession>Q6FCA2</accession>
<feature type="chain" id="PRO_0000171248" description="Muconate cycloisomerase 1">
    <location>
        <begin position="1"/>
        <end position="370"/>
    </location>
</feature>
<feature type="active site" evidence="1">
    <location>
        <position position="166"/>
    </location>
</feature>
<feature type="binding site" evidence="1">
    <location>
        <position position="195"/>
    </location>
    <ligand>
        <name>Mn(2+)</name>
        <dbReference type="ChEBI" id="CHEBI:29035"/>
    </ligand>
</feature>
<feature type="binding site" evidence="1">
    <location>
        <position position="221"/>
    </location>
    <ligand>
        <name>Mn(2+)</name>
        <dbReference type="ChEBI" id="CHEBI:29035"/>
    </ligand>
</feature>
<feature type="binding site" evidence="1">
    <location>
        <position position="246"/>
    </location>
    <ligand>
        <name>Mn(2+)</name>
        <dbReference type="ChEBI" id="CHEBI:29035"/>
    </ligand>
</feature>
<feature type="sequence conflict" description="In Ref. 1; AAC46430." evidence="3" ref="1">
    <original>P</original>
    <variation>A</variation>
    <location>
        <position position="303"/>
    </location>
</feature>
<keyword id="KW-0058">Aromatic hydrocarbons catabolism</keyword>
<keyword id="KW-0413">Isomerase</keyword>
<keyword id="KW-0464">Manganese</keyword>
<keyword id="KW-0479">Metal-binding</keyword>
<evidence type="ECO:0000250" key="1"/>
<evidence type="ECO:0000250" key="2">
    <source>
        <dbReference type="UniProtKB" id="P08310"/>
    </source>
</evidence>
<evidence type="ECO:0000305" key="3"/>
<reference key="1">
    <citation type="journal article" date="1994" name="Gene">
        <title>Unusual G + C content and codon usage in catIJF, a segment of the ben-cat supra-operonic cluster in the Acinetobacter calcoaceticus chromosome.</title>
        <authorList>
            <person name="Shanley M.S."/>
            <person name="Harrison A."/>
            <person name="Parales R.E."/>
            <person name="Kowalchuk G."/>
            <person name="Mitchell D.J."/>
            <person name="Ornston L.N."/>
        </authorList>
    </citation>
    <scope>NUCLEOTIDE SEQUENCE [GENOMIC DNA]</scope>
</reference>
<reference key="2">
    <citation type="journal article" date="2004" name="Nucleic Acids Res.">
        <title>Unique features revealed by the genome sequence of Acinetobacter sp. ADP1, a versatile and naturally transformation competent bacterium.</title>
        <authorList>
            <person name="Barbe V."/>
            <person name="Vallenet D."/>
            <person name="Fonknechten N."/>
            <person name="Kreimeyer A."/>
            <person name="Oztas S."/>
            <person name="Labarre L."/>
            <person name="Cruveiller S."/>
            <person name="Robert C."/>
            <person name="Duprat S."/>
            <person name="Wincker P."/>
            <person name="Ornston L.N."/>
            <person name="Weissenbach J."/>
            <person name="Marliere P."/>
            <person name="Cohen G.N."/>
            <person name="Medigue C."/>
        </authorList>
    </citation>
    <scope>NUCLEOTIDE SEQUENCE [LARGE SCALE GENOMIC DNA]</scope>
    <source>
        <strain>ATCC 33305 / BD413 / ADP1</strain>
    </source>
</reference>
<proteinExistence type="inferred from homology"/>
<name>CATB_ACIAD</name>
<dbReference type="EC" id="5.5.1.1" evidence="2"/>
<dbReference type="EMBL" id="AF009224">
    <property type="protein sequence ID" value="AAC46430.1"/>
    <property type="molecule type" value="Genomic_DNA"/>
</dbReference>
<dbReference type="EMBL" id="CR543861">
    <property type="protein sequence ID" value="CAG68309.1"/>
    <property type="molecule type" value="Genomic_DNA"/>
</dbReference>
<dbReference type="RefSeq" id="WP_011182286.1">
    <property type="nucleotide sequence ID" value="NC_005966.1"/>
</dbReference>
<dbReference type="SMR" id="Q43931"/>
<dbReference type="STRING" id="202950.GCA_001485005_01200"/>
<dbReference type="GeneID" id="45233858"/>
<dbReference type="KEGG" id="aci:ACIAD1446"/>
<dbReference type="eggNOG" id="COG4948">
    <property type="taxonomic scope" value="Bacteria"/>
</dbReference>
<dbReference type="HOGENOM" id="CLU_030273_4_5_6"/>
<dbReference type="OrthoDB" id="5596677at2"/>
<dbReference type="BioCyc" id="ASP62977:ACIAD_RS06680-MONOMER"/>
<dbReference type="UniPathway" id="UPA00157">
    <property type="reaction ID" value="UER00259"/>
</dbReference>
<dbReference type="Proteomes" id="UP000000430">
    <property type="component" value="Chromosome"/>
</dbReference>
<dbReference type="GO" id="GO:0018850">
    <property type="term" value="F:chloromuconate cycloisomerase activity"/>
    <property type="evidence" value="ECO:0007669"/>
    <property type="project" value="InterPro"/>
</dbReference>
<dbReference type="GO" id="GO:0030145">
    <property type="term" value="F:manganese ion binding"/>
    <property type="evidence" value="ECO:0007669"/>
    <property type="project" value="InterPro"/>
</dbReference>
<dbReference type="GO" id="GO:0018849">
    <property type="term" value="F:muconate cycloisomerase activity"/>
    <property type="evidence" value="ECO:0007669"/>
    <property type="project" value="UniProtKB-EC"/>
</dbReference>
<dbReference type="GO" id="GO:0009063">
    <property type="term" value="P:amino acid catabolic process"/>
    <property type="evidence" value="ECO:0007669"/>
    <property type="project" value="InterPro"/>
</dbReference>
<dbReference type="GO" id="GO:0042952">
    <property type="term" value="P:beta-ketoadipate pathway"/>
    <property type="evidence" value="ECO:0007669"/>
    <property type="project" value="UniProtKB-UniPathway"/>
</dbReference>
<dbReference type="CDD" id="cd03318">
    <property type="entry name" value="MLE"/>
    <property type="match status" value="1"/>
</dbReference>
<dbReference type="Gene3D" id="3.20.20.120">
    <property type="entry name" value="Enolase-like C-terminal domain"/>
    <property type="match status" value="1"/>
</dbReference>
<dbReference type="Gene3D" id="3.30.390.10">
    <property type="entry name" value="Enolase-like, N-terminal domain"/>
    <property type="match status" value="1"/>
</dbReference>
<dbReference type="InterPro" id="IPR013370">
    <property type="entry name" value="Chloromuconate_cycloisomerase"/>
</dbReference>
<dbReference type="InterPro" id="IPR036849">
    <property type="entry name" value="Enolase-like_C_sf"/>
</dbReference>
<dbReference type="InterPro" id="IPR029017">
    <property type="entry name" value="Enolase-like_N"/>
</dbReference>
<dbReference type="InterPro" id="IPR029065">
    <property type="entry name" value="Enolase_C-like"/>
</dbReference>
<dbReference type="InterPro" id="IPR018110">
    <property type="entry name" value="Mandel_Rmase/mucon_lact_enz_CS"/>
</dbReference>
<dbReference type="InterPro" id="IPR013342">
    <property type="entry name" value="Mandelate_racemase_C"/>
</dbReference>
<dbReference type="InterPro" id="IPR013341">
    <property type="entry name" value="Mandelate_racemase_N_dom"/>
</dbReference>
<dbReference type="NCBIfam" id="TIGR02534">
    <property type="entry name" value="mucon_cyclo"/>
    <property type="match status" value="1"/>
</dbReference>
<dbReference type="PANTHER" id="PTHR48073:SF2">
    <property type="entry name" value="O-SUCCINYLBENZOATE SYNTHASE"/>
    <property type="match status" value="1"/>
</dbReference>
<dbReference type="PANTHER" id="PTHR48073">
    <property type="entry name" value="O-SUCCINYLBENZOATE SYNTHASE-RELATED"/>
    <property type="match status" value="1"/>
</dbReference>
<dbReference type="Pfam" id="PF13378">
    <property type="entry name" value="MR_MLE_C"/>
    <property type="match status" value="1"/>
</dbReference>
<dbReference type="Pfam" id="PF02746">
    <property type="entry name" value="MR_MLE_N"/>
    <property type="match status" value="1"/>
</dbReference>
<dbReference type="SFLD" id="SFLDG01258">
    <property type="entry name" value="(chloro)muconate_cycloisomeras"/>
    <property type="match status" value="1"/>
</dbReference>
<dbReference type="SFLD" id="SFLDS00001">
    <property type="entry name" value="Enolase"/>
    <property type="match status" value="1"/>
</dbReference>
<dbReference type="SFLD" id="SFLDF00009">
    <property type="entry name" value="o-succinylbenzoate_synthase"/>
    <property type="match status" value="1"/>
</dbReference>
<dbReference type="SMART" id="SM00922">
    <property type="entry name" value="MR_MLE"/>
    <property type="match status" value="1"/>
</dbReference>
<dbReference type="SUPFAM" id="SSF51604">
    <property type="entry name" value="Enolase C-terminal domain-like"/>
    <property type="match status" value="1"/>
</dbReference>
<dbReference type="SUPFAM" id="SSF54826">
    <property type="entry name" value="Enolase N-terminal domain-like"/>
    <property type="match status" value="1"/>
</dbReference>
<dbReference type="PROSITE" id="PS00908">
    <property type="entry name" value="MR_MLE_1"/>
    <property type="match status" value="1"/>
</dbReference>
<dbReference type="PROSITE" id="PS00909">
    <property type="entry name" value="MR_MLE_2"/>
    <property type="match status" value="1"/>
</dbReference>
<sequence length="370" mass="40415">MYKSVETILVDIPTIRPHKLSVTTMQTQTLVLIKIITEDGIVGWGEATTIGGLNYGEESPESVKANIDTYFKPLLLSIKAPLNVAQTLKLIRKSINGNRFAKCAIQTALLEIQAKRLNVPVSELLGGRIRDRLPVLWTLASGDTDKDIAEAKKMIELKRHNTFKLKIGSNPLQHDVDHVIAIKKALGPEISVRVDVNRAWSELECVKGIQQLQDGGIDLIEQPCAIENTDALARLTARFDVAIMADEVLTGPDSAYRIAKKSGADVFAVKVEQSGGLIEACEVAKIARLAGISLYGGTMLEGPVGSIASAHAFSTFETLEFGTELFGPLLLTQSILKTPLQYENFELVVPNTPGLGIEVDEDKLEQLRRH</sequence>
<protein>
    <recommendedName>
        <fullName>Muconate cycloisomerase 1</fullName>
        <ecNumber evidence="2">5.5.1.1</ecNumber>
    </recommendedName>
    <alternativeName>
        <fullName>Cis,cis-muconate lactonizing enzyme I</fullName>
        <shortName>MLE</shortName>
    </alternativeName>
    <alternativeName>
        <fullName>Muconate cycloisomerase I</fullName>
    </alternativeName>
</protein>
<comment type="function">
    <text>Catalyzes a syn cycloisomerization.</text>
</comment>
<comment type="catalytic activity">
    <reaction evidence="2">
        <text>(S)-muconolactone = cis,cis-muconate + H(+)</text>
        <dbReference type="Rhea" id="RHEA:30031"/>
        <dbReference type="ChEBI" id="CHEBI:15378"/>
        <dbReference type="ChEBI" id="CHEBI:32379"/>
        <dbReference type="ChEBI" id="CHEBI:58736"/>
        <dbReference type="EC" id="5.5.1.1"/>
    </reaction>
</comment>
<comment type="cofactor">
    <cofactor evidence="1">
        <name>Mn(2+)</name>
        <dbReference type="ChEBI" id="CHEBI:29035"/>
    </cofactor>
</comment>
<comment type="pathway">
    <text>Aromatic compound metabolism; beta-ketoadipate pathway; 5-oxo-4,5-dihydro-2-furylacetate from catechol: step 2/3.</text>
</comment>
<comment type="subunit">
    <text evidence="1">Homooctamer.</text>
</comment>
<comment type="similarity">
    <text evidence="3">Belongs to the mandelate racemase/muconate lactonizing enzyme family.</text>
</comment>
<gene>
    <name type="primary">catB</name>
    <name type="ordered locus">ACIAD1446</name>
</gene>
<organism>
    <name type="scientific">Acinetobacter baylyi (strain ATCC 33305 / BD413 / ADP1)</name>
    <dbReference type="NCBI Taxonomy" id="62977"/>
    <lineage>
        <taxon>Bacteria</taxon>
        <taxon>Pseudomonadati</taxon>
        <taxon>Pseudomonadota</taxon>
        <taxon>Gammaproteobacteria</taxon>
        <taxon>Moraxellales</taxon>
        <taxon>Moraxellaceae</taxon>
        <taxon>Acinetobacter</taxon>
    </lineage>
</organism>